<name>RBF1_CAEEL</name>
<sequence>MTKSTKLRHCKQKKKKPEKTPKGNPPILITEKSIEDAATTTSTTDALLGSPEGSRSKSRKLKLCCCTAQAATLSPLDPTSYGGIASTSAHNGMVGGLSRDSRAASRTSKRGSSKSLNRPQIDADEPSTSGTNPDRRPSTHFVLDLPVVSTRLRKLSEAFFNAQHGDKIDLMNDWEIGGTQNKWVCPSDRHLHLRAQLKSGWSVRTATARSPTNSKAQTGSITAAEQEHIQKVLAKAEESKSKEQQRIGKMVDRLEKMRRRATGNGVTHCLLCHTEFGLLASKSYAAMCVDCRKYVCQRNCGVETTDVNQTTGKVETVFLCKICSEAREVLWKKSGAWFYKEMPEFQRPDDRLPYYVPVTTNGTLPNASSAATPLSGTPGGAGPQPMTMPSTSSCQMTTPKWASPGVCNSPGLQMNGGPTSPLPNGTRRNTGHGGIEFPSSSRPSICSVLQAIEPLDRSKSPRPRIQPRWVNEKVMSSMSVDDEEKAASSSDGESFVQSGVPRRALNNKTPVGSTSATTSPAPPPTSTTPTSRREANMERFSRHTHAHANRLYSTDDDDDSSPESRPSTRSTSPRHSLATPSSYAHDTCHDTSLPDADTRSIDSGVVQSDHSNPQQSGLTCSSSSLTPLQQQASHDHHSGGGTPRRISNPDRTTSRVAQSASGTSLVTPPPPISSRTSPDNCNSSPLNVMEHKSSSASTASSGGNRRVGSAEPVLNNHHAMHNNQNHNDINKKLISQTSRAESPLAASSSFLSSPDDDTKQKNRRRDGVGRVNSLQLRTSLDDVAPPVAPISKMNGHIVSSEPTSSTTSNQNHTSVPIPTVPVVPEEEEEKAITASTESASEPGSLGSITLTLTYHSADKKLKMHLIRAKNLKAMDSNGFSDPYVKFHLLPGNTKATKLTSKTIEKTLNPEWNEEMSYYGITEDDKEKKILRVTVLDRDRIGSDFLGETRIALKKLNDNEMKKFNLYLESALPVPQQTKEEENEDRGKINVGLQYNIQQGSLFININRCVELVGMDSTGFSDPYCKVSLTPITSKAHRAKTSTKKRTLNPEWNEQLQFVVPFKDLPKKTLQIGVYDHDLGKHDDYIGGILLSTSAKDERGRQWIKCIENPGTLVEAWHRLELDS</sequence>
<feature type="chain" id="PRO_0000190231" description="Rabphilin-1">
    <location>
        <begin position="1"/>
        <end position="1123"/>
    </location>
</feature>
<feature type="domain" description="RabBD" evidence="4">
    <location>
        <begin position="215"/>
        <end position="341"/>
    </location>
</feature>
<feature type="domain" description="C2 1" evidence="2">
    <location>
        <begin position="844"/>
        <end position="967"/>
    </location>
</feature>
<feature type="domain" description="C2 2" evidence="2">
    <location>
        <begin position="984"/>
        <end position="1103"/>
    </location>
</feature>
<feature type="zinc finger region" description="FYVE-type" evidence="3">
    <location>
        <begin position="263"/>
        <end position="328"/>
    </location>
</feature>
<feature type="region of interest" description="Disordered" evidence="5">
    <location>
        <begin position="1"/>
        <end position="56"/>
    </location>
</feature>
<feature type="region of interest" description="Disordered" evidence="5">
    <location>
        <begin position="88"/>
        <end position="140"/>
    </location>
</feature>
<feature type="region of interest" description="Disordered" evidence="5">
    <location>
        <begin position="365"/>
        <end position="710"/>
    </location>
</feature>
<feature type="region of interest" description="Disordered" evidence="5">
    <location>
        <begin position="737"/>
        <end position="779"/>
    </location>
</feature>
<feature type="region of interest" description="Disordered" evidence="5">
    <location>
        <begin position="796"/>
        <end position="818"/>
    </location>
</feature>
<feature type="compositionally biased region" description="Basic residues" evidence="5">
    <location>
        <begin position="1"/>
        <end position="17"/>
    </location>
</feature>
<feature type="compositionally biased region" description="Low complexity" evidence="5">
    <location>
        <begin position="36"/>
        <end position="46"/>
    </location>
</feature>
<feature type="compositionally biased region" description="Polar residues" evidence="5">
    <location>
        <begin position="365"/>
        <end position="375"/>
    </location>
</feature>
<feature type="compositionally biased region" description="Polar residues" evidence="5">
    <location>
        <begin position="387"/>
        <end position="400"/>
    </location>
</feature>
<feature type="compositionally biased region" description="Polar residues" evidence="5">
    <location>
        <begin position="410"/>
        <end position="428"/>
    </location>
</feature>
<feature type="compositionally biased region" description="Polar residues" evidence="5">
    <location>
        <begin position="487"/>
        <end position="497"/>
    </location>
</feature>
<feature type="compositionally biased region" description="Basic and acidic residues" evidence="5">
    <location>
        <begin position="531"/>
        <end position="541"/>
    </location>
</feature>
<feature type="compositionally biased region" description="Low complexity" evidence="5">
    <location>
        <begin position="563"/>
        <end position="574"/>
    </location>
</feature>
<feature type="compositionally biased region" description="Polar residues" evidence="5">
    <location>
        <begin position="605"/>
        <end position="632"/>
    </location>
</feature>
<feature type="compositionally biased region" description="Polar residues" evidence="5">
    <location>
        <begin position="649"/>
        <end position="666"/>
    </location>
</feature>
<feature type="compositionally biased region" description="Low complexity" evidence="5">
    <location>
        <begin position="742"/>
        <end position="753"/>
    </location>
</feature>
<feature type="compositionally biased region" description="Basic and acidic residues" evidence="5">
    <location>
        <begin position="756"/>
        <end position="768"/>
    </location>
</feature>
<feature type="compositionally biased region" description="Low complexity" evidence="5">
    <location>
        <begin position="803"/>
        <end position="818"/>
    </location>
</feature>
<feature type="binding site" evidence="3">
    <location>
        <position position="269"/>
    </location>
    <ligand>
        <name>Zn(2+)</name>
        <dbReference type="ChEBI" id="CHEBI:29105"/>
        <label>1</label>
    </ligand>
</feature>
<feature type="binding site" evidence="3">
    <location>
        <position position="272"/>
    </location>
    <ligand>
        <name>Zn(2+)</name>
        <dbReference type="ChEBI" id="CHEBI:29105"/>
        <label>1</label>
    </ligand>
</feature>
<feature type="binding site" evidence="3">
    <location>
        <position position="288"/>
    </location>
    <ligand>
        <name>Zn(2+)</name>
        <dbReference type="ChEBI" id="CHEBI:29105"/>
        <label>2</label>
    </ligand>
</feature>
<feature type="binding site" evidence="3">
    <location>
        <position position="291"/>
    </location>
    <ligand>
        <name>Zn(2+)</name>
        <dbReference type="ChEBI" id="CHEBI:29105"/>
        <label>2</label>
    </ligand>
</feature>
<feature type="binding site" evidence="3">
    <location>
        <position position="296"/>
    </location>
    <ligand>
        <name>Zn(2+)</name>
        <dbReference type="ChEBI" id="CHEBI:29105"/>
        <label>1</label>
    </ligand>
</feature>
<feature type="binding site" evidence="3">
    <location>
        <position position="300"/>
    </location>
    <ligand>
        <name>Zn(2+)</name>
        <dbReference type="ChEBI" id="CHEBI:29105"/>
        <label>1</label>
    </ligand>
</feature>
<feature type="binding site" evidence="3">
    <location>
        <position position="320"/>
    </location>
    <ligand>
        <name>Zn(2+)</name>
        <dbReference type="ChEBI" id="CHEBI:29105"/>
        <label>2</label>
    </ligand>
</feature>
<feature type="binding site" evidence="3">
    <location>
        <position position="323"/>
    </location>
    <ligand>
        <name>Zn(2+)</name>
        <dbReference type="ChEBI" id="CHEBI:29105"/>
        <label>2</label>
    </ligand>
</feature>
<feature type="binding site" evidence="2">
    <location>
        <position position="875"/>
    </location>
    <ligand>
        <name>Ca(2+)</name>
        <dbReference type="ChEBI" id="CHEBI:29108"/>
        <label>1</label>
    </ligand>
</feature>
<feature type="binding site" evidence="2">
    <location>
        <position position="875"/>
    </location>
    <ligand>
        <name>Ca(2+)</name>
        <dbReference type="ChEBI" id="CHEBI:29108"/>
        <label>2</label>
    </ligand>
</feature>
<feature type="binding site" evidence="2">
    <location>
        <position position="881"/>
    </location>
    <ligand>
        <name>Ca(2+)</name>
        <dbReference type="ChEBI" id="CHEBI:29108"/>
        <label>1</label>
    </ligand>
</feature>
<feature type="binding site" evidence="2">
    <location>
        <position position="936"/>
    </location>
    <ligand>
        <name>Ca(2+)</name>
        <dbReference type="ChEBI" id="CHEBI:29108"/>
        <label>1</label>
    </ligand>
</feature>
<feature type="binding site" evidence="2">
    <location>
        <position position="936"/>
    </location>
    <ligand>
        <name>Ca(2+)</name>
        <dbReference type="ChEBI" id="CHEBI:29108"/>
        <label>2</label>
    </ligand>
</feature>
<feature type="binding site" evidence="2">
    <location>
        <position position="938"/>
    </location>
    <ligand>
        <name>Ca(2+)</name>
        <dbReference type="ChEBI" id="CHEBI:29108"/>
        <label>1</label>
    </ligand>
</feature>
<feature type="binding site" evidence="2">
    <location>
        <position position="938"/>
    </location>
    <ligand>
        <name>Ca(2+)</name>
        <dbReference type="ChEBI" id="CHEBI:29108"/>
        <label>2</label>
    </ligand>
</feature>
<feature type="binding site" evidence="2">
    <location>
        <position position="943"/>
    </location>
    <ligand>
        <name>Ca(2+)</name>
        <dbReference type="ChEBI" id="CHEBI:29108"/>
        <label>2</label>
    </ligand>
</feature>
<feature type="binding site" evidence="2">
    <location>
        <position position="1015"/>
    </location>
    <ligand>
        <name>Ca(2+)</name>
        <dbReference type="ChEBI" id="CHEBI:29108"/>
        <label>3</label>
    </ligand>
</feature>
<feature type="binding site" evidence="2">
    <location>
        <position position="1015"/>
    </location>
    <ligand>
        <name>Ca(2+)</name>
        <dbReference type="ChEBI" id="CHEBI:29108"/>
        <label>4</label>
    </ligand>
</feature>
<feature type="binding site" evidence="2">
    <location>
        <position position="1021"/>
    </location>
    <ligand>
        <name>Ca(2+)</name>
        <dbReference type="ChEBI" id="CHEBI:29108"/>
        <label>3</label>
    </ligand>
</feature>
<feature type="binding site" evidence="2">
    <location>
        <position position="1075"/>
    </location>
    <ligand>
        <name>Ca(2+)</name>
        <dbReference type="ChEBI" id="CHEBI:29108"/>
        <label>3</label>
    </ligand>
</feature>
<feature type="binding site" evidence="2">
    <location>
        <position position="1075"/>
    </location>
    <ligand>
        <name>Ca(2+)</name>
        <dbReference type="ChEBI" id="CHEBI:29108"/>
        <label>4</label>
    </ligand>
</feature>
<feature type="binding site" evidence="2">
    <location>
        <position position="1077"/>
    </location>
    <ligand>
        <name>Ca(2+)</name>
        <dbReference type="ChEBI" id="CHEBI:29108"/>
        <label>3</label>
    </ligand>
</feature>
<feature type="binding site" evidence="2">
    <location>
        <position position="1077"/>
    </location>
    <ligand>
        <name>Ca(2+)</name>
        <dbReference type="ChEBI" id="CHEBI:29108"/>
        <label>4</label>
    </ligand>
</feature>
<feature type="binding site" evidence="2">
    <location>
        <position position="1083"/>
    </location>
    <ligand>
        <name>Ca(2+)</name>
        <dbReference type="ChEBI" id="CHEBI:29108"/>
        <label>4</label>
    </ligand>
</feature>
<feature type="splice variant" id="VSP_011908" description="In isoform a." evidence="7">
    <location>
        <begin position="1"/>
        <end position="170"/>
    </location>
</feature>
<feature type="splice variant" id="VSP_062475" description="In isoform c." evidence="8">
    <original>MTKSTKLRHCKQKKKKPEKTPKGNPPILITEKSIEDAATTTSTTDALLGSPEGSRSKSRKLKLCCCTAQAATLSPLDPTSYGGIASTSAHNGMVGGLSRDSRAASRTSKRGSSKSLNRPQIDADEPSTSGTNPDRRPSTHFVLDLPVVSTRLRKLSEAFFNAQHGDKID</original>
    <variation>MYMNREDH</variation>
    <location>
        <begin position="1"/>
        <end position="169"/>
    </location>
</feature>
<feature type="splice variant" id="VSP_062476" description="In isoform b." evidence="8">
    <original>MTKSTKLRHCKQKKKKPEKTPKGNPPILITEKSIEDAATTTSTTDALLGSPEGSRSKSRKLKLCCCTAQAATLSPLDPTSYGGIASTSAHNGMVGGLSRDSRAASRTSKRGSSKSLNRPQIDADEPSTSGTNPDRRPSTHFVLDLPVVSTRLRKLSEAFFNAQHGDKI</original>
    <variation>MFSRRTTPSPSITTASSSTFSISNLTNNNATSTSDLPASAISNIVPQIPPTPRRVPPKIGLLRHLSGFLESKK</variation>
    <location>
        <begin position="1"/>
        <end position="168"/>
    </location>
</feature>
<protein>
    <recommendedName>
        <fullName>Rabphilin-1</fullName>
    </recommendedName>
</protein>
<accession>P41885</accession>
<accession>Q8MQ57</accession>
<accession>Q8WT49</accession>
<accession>Q8WT50</accession>
<accession>Q962V6</accession>
<proteinExistence type="evidence at transcript level"/>
<evidence type="ECO:0000250" key="1"/>
<evidence type="ECO:0000255" key="2">
    <source>
        <dbReference type="PROSITE-ProRule" id="PRU00041"/>
    </source>
</evidence>
<evidence type="ECO:0000255" key="3">
    <source>
        <dbReference type="PROSITE-ProRule" id="PRU00091"/>
    </source>
</evidence>
<evidence type="ECO:0000255" key="4">
    <source>
        <dbReference type="PROSITE-ProRule" id="PRU00234"/>
    </source>
</evidence>
<evidence type="ECO:0000256" key="5">
    <source>
        <dbReference type="SAM" id="MobiDB-lite"/>
    </source>
</evidence>
<evidence type="ECO:0000269" key="6">
    <source>
    </source>
</evidence>
<evidence type="ECO:0000303" key="7">
    <source>
    </source>
</evidence>
<evidence type="ECO:0000305" key="8"/>
<evidence type="ECO:0000312" key="9">
    <source>
        <dbReference type="WormBase" id="F37A4.7a"/>
    </source>
</evidence>
<evidence type="ECO:0000312" key="10">
    <source>
        <dbReference type="WormBase" id="F37A4.7b"/>
    </source>
</evidence>
<evidence type="ECO:0000312" key="11">
    <source>
        <dbReference type="WormBase" id="F37A4.7c"/>
    </source>
</evidence>
<evidence type="ECO:0000312" key="12">
    <source>
        <dbReference type="WormBase" id="F37A4.7d"/>
    </source>
</evidence>
<reference key="1">
    <citation type="journal article" date="2001" name="J. Neurosci.">
        <title>Rabphilin potentiates soluble N-ethylmaleimide sensitive factor attachment protein receptor function independently of rab3.</title>
        <authorList>
            <person name="Staunton J."/>
            <person name="Ganetzky B."/>
            <person name="Nonet M.L."/>
        </authorList>
    </citation>
    <scope>NUCLEOTIDE SEQUENCE [MRNA] (ISOFORM A)</scope>
    <scope>FUNCTION</scope>
</reference>
<reference key="2">
    <citation type="journal article" date="1998" name="Science">
        <title>Genome sequence of the nematode C. elegans: a platform for investigating biology.</title>
        <authorList>
            <consortium name="The C. elegans sequencing consortium"/>
        </authorList>
    </citation>
    <scope>NUCLEOTIDE SEQUENCE [LARGE SCALE GENOMIC DNA]</scope>
    <scope>ALTERNATIVE SPLICING</scope>
    <source>
        <strain>Bristol N2</strain>
    </source>
</reference>
<dbReference type="EMBL" id="AF399852">
    <property type="protein sequence ID" value="AAK84870.1"/>
    <property type="molecule type" value="mRNA"/>
</dbReference>
<dbReference type="EMBL" id="FO081312">
    <property type="protein sequence ID" value="CCD70705.1"/>
    <property type="molecule type" value="Genomic_DNA"/>
</dbReference>
<dbReference type="EMBL" id="FO081312">
    <property type="protein sequence ID" value="CCD70706.1"/>
    <property type="molecule type" value="Genomic_DNA"/>
</dbReference>
<dbReference type="EMBL" id="FO081312">
    <property type="protein sequence ID" value="CCD70707.1"/>
    <property type="molecule type" value="Genomic_DNA"/>
</dbReference>
<dbReference type="EMBL" id="FO081312">
    <property type="protein sequence ID" value="CCD70708.1"/>
    <property type="molecule type" value="Genomic_DNA"/>
</dbReference>
<dbReference type="PIR" id="S44644">
    <property type="entry name" value="S44644"/>
</dbReference>
<dbReference type="RefSeq" id="NP_001022566.1">
    <molecule id="P41885-3"/>
    <property type="nucleotide sequence ID" value="NM_001027395.5"/>
</dbReference>
<dbReference type="RefSeq" id="NP_001022567.1">
    <molecule id="P41885-4"/>
    <property type="nucleotide sequence ID" value="NM_001027396.5"/>
</dbReference>
<dbReference type="RefSeq" id="NP_001022568.1">
    <property type="nucleotide sequence ID" value="NM_001027397.2"/>
</dbReference>
<dbReference type="RefSeq" id="NP_001367825.1">
    <molecule id="P41885-1"/>
    <property type="nucleotide sequence ID" value="NM_001379772.1"/>
</dbReference>
<dbReference type="RefSeq" id="NP_001379930.1">
    <molecule id="P41885-2"/>
    <property type="nucleotide sequence ID" value="NM_001392126.1"/>
</dbReference>
<dbReference type="RefSeq" id="NP_498467.3">
    <property type="nucleotide sequence ID" value="NM_066066.5"/>
</dbReference>
<dbReference type="BioGRID" id="41159">
    <property type="interactions" value="1"/>
</dbReference>
<dbReference type="FunCoup" id="P41885">
    <property type="interactions" value="330"/>
</dbReference>
<dbReference type="IntAct" id="P41885">
    <property type="interactions" value="1"/>
</dbReference>
<dbReference type="STRING" id="6239.F37A4.7d.1"/>
<dbReference type="iPTMnet" id="P41885"/>
<dbReference type="PaxDb" id="6239-F37A4.7d"/>
<dbReference type="PeptideAtlas" id="P41885"/>
<dbReference type="EnsemblMetazoa" id="F37A4.7a.1">
    <molecule id="P41885-2"/>
    <property type="protein sequence ID" value="F37A4.7a.1"/>
    <property type="gene ID" value="WBGene00004316"/>
</dbReference>
<dbReference type="EnsemblMetazoa" id="F37A4.7a.2">
    <molecule id="P41885-2"/>
    <property type="protein sequence ID" value="F37A4.7a.2"/>
    <property type="gene ID" value="WBGene00004316"/>
</dbReference>
<dbReference type="EnsemblMetazoa" id="F37A4.7a.3">
    <molecule id="P41885-2"/>
    <property type="protein sequence ID" value="F37A4.7a.3"/>
    <property type="gene ID" value="WBGene00004316"/>
</dbReference>
<dbReference type="EnsemblMetazoa" id="F37A4.7b.1">
    <molecule id="P41885-3"/>
    <property type="protein sequence ID" value="F37A4.7b.1"/>
    <property type="gene ID" value="WBGene00004316"/>
</dbReference>
<dbReference type="EnsemblMetazoa" id="F37A4.7c.1">
    <molecule id="P41885-4"/>
    <property type="protein sequence ID" value="F37A4.7c.1"/>
    <property type="gene ID" value="WBGene00004316"/>
</dbReference>
<dbReference type="EnsemblMetazoa" id="F37A4.7d.1">
    <molecule id="P41885-1"/>
    <property type="protein sequence ID" value="F37A4.7d.1"/>
    <property type="gene ID" value="WBGene00004316"/>
</dbReference>
<dbReference type="GeneID" id="175943"/>
<dbReference type="KEGG" id="cel:CELE_F37A4.7"/>
<dbReference type="UCSC" id="F37A4.7d">
    <molecule id="P41885-1"/>
    <property type="organism name" value="c. elegans"/>
</dbReference>
<dbReference type="AGR" id="WB:WBGene00004316"/>
<dbReference type="CTD" id="175943"/>
<dbReference type="WormBase" id="F37A4.7a">
    <molecule id="P41885-2"/>
    <property type="protein sequence ID" value="CE29961"/>
    <property type="gene ID" value="WBGene00004316"/>
    <property type="gene designation" value="rbf-1"/>
</dbReference>
<dbReference type="WormBase" id="F37A4.7b">
    <molecule id="P41885-3"/>
    <property type="protein sequence ID" value="CE29962"/>
    <property type="gene ID" value="WBGene00004316"/>
    <property type="gene designation" value="rbf-1"/>
</dbReference>
<dbReference type="WormBase" id="F37A4.7c">
    <molecule id="P41885-4"/>
    <property type="protein sequence ID" value="CE29963"/>
    <property type="gene ID" value="WBGene00004316"/>
    <property type="gene designation" value="rbf-1"/>
</dbReference>
<dbReference type="WormBase" id="F37A4.7d">
    <molecule id="P41885-1"/>
    <property type="protein sequence ID" value="CE30975"/>
    <property type="gene ID" value="WBGene00004316"/>
    <property type="gene designation" value="rbf-1"/>
</dbReference>
<dbReference type="eggNOG" id="KOG1013">
    <property type="taxonomic scope" value="Eukaryota"/>
</dbReference>
<dbReference type="InParanoid" id="P41885"/>
<dbReference type="OMA" id="IRYHTSE"/>
<dbReference type="OrthoDB" id="270970at2759"/>
<dbReference type="PRO" id="PR:P41885"/>
<dbReference type="Proteomes" id="UP000001940">
    <property type="component" value="Chromosome III"/>
</dbReference>
<dbReference type="Bgee" id="WBGene00004316">
    <property type="expression patterns" value="Expressed in larva and 3 other cell types or tissues"/>
</dbReference>
<dbReference type="GO" id="GO:0016020">
    <property type="term" value="C:membrane"/>
    <property type="evidence" value="ECO:0007669"/>
    <property type="project" value="InterPro"/>
</dbReference>
<dbReference type="GO" id="GO:0045202">
    <property type="term" value="C:synapse"/>
    <property type="evidence" value="ECO:0000318"/>
    <property type="project" value="GO_Central"/>
</dbReference>
<dbReference type="GO" id="GO:0008021">
    <property type="term" value="C:synaptic vesicle"/>
    <property type="evidence" value="ECO:0000314"/>
    <property type="project" value="WormBase"/>
</dbReference>
<dbReference type="GO" id="GO:0031267">
    <property type="term" value="F:small GTPase binding"/>
    <property type="evidence" value="ECO:0007669"/>
    <property type="project" value="InterPro"/>
</dbReference>
<dbReference type="GO" id="GO:0008270">
    <property type="term" value="F:zinc ion binding"/>
    <property type="evidence" value="ECO:0007669"/>
    <property type="project" value="UniProtKB-KW"/>
</dbReference>
<dbReference type="GO" id="GO:0099502">
    <property type="term" value="P:calcium-dependent activation of synaptic vesicle fusion"/>
    <property type="evidence" value="ECO:0000318"/>
    <property type="project" value="GO_Central"/>
</dbReference>
<dbReference type="GO" id="GO:1990504">
    <property type="term" value="P:dense core granule exocytosis"/>
    <property type="evidence" value="ECO:0000315"/>
    <property type="project" value="WormBase"/>
</dbReference>
<dbReference type="GO" id="GO:0006886">
    <property type="term" value="P:intracellular protein transport"/>
    <property type="evidence" value="ECO:0007669"/>
    <property type="project" value="InterPro"/>
</dbReference>
<dbReference type="GO" id="GO:0045956">
    <property type="term" value="P:positive regulation of calcium ion-dependent exocytosis"/>
    <property type="evidence" value="ECO:0000318"/>
    <property type="project" value="GO_Central"/>
</dbReference>
<dbReference type="GO" id="GO:0040017">
    <property type="term" value="P:positive regulation of locomotion"/>
    <property type="evidence" value="ECO:0000315"/>
    <property type="project" value="WormBase"/>
</dbReference>
<dbReference type="CDD" id="cd04035">
    <property type="entry name" value="C2A_Rabphilin_Doc2"/>
    <property type="match status" value="1"/>
</dbReference>
<dbReference type="CDD" id="cd08384">
    <property type="entry name" value="C2B_Rabphilin_Doc2"/>
    <property type="match status" value="1"/>
</dbReference>
<dbReference type="CDD" id="cd15746">
    <property type="entry name" value="FYVE_RP3A_like"/>
    <property type="match status" value="1"/>
</dbReference>
<dbReference type="Gene3D" id="2.60.40.150">
    <property type="entry name" value="C2 domain"/>
    <property type="match status" value="2"/>
</dbReference>
<dbReference type="Gene3D" id="3.30.40.10">
    <property type="entry name" value="Zinc/RING finger domain, C3HC4 (zinc finger)"/>
    <property type="match status" value="1"/>
</dbReference>
<dbReference type="InterPro" id="IPR000008">
    <property type="entry name" value="C2_dom"/>
</dbReference>
<dbReference type="InterPro" id="IPR035892">
    <property type="entry name" value="C2_domain_sf"/>
</dbReference>
<dbReference type="InterPro" id="IPR041282">
    <property type="entry name" value="FYVE_2"/>
</dbReference>
<dbReference type="InterPro" id="IPR030541">
    <property type="entry name" value="FYVE_RBF-1"/>
</dbReference>
<dbReference type="InterPro" id="IPR010911">
    <property type="entry name" value="Rab_BD"/>
</dbReference>
<dbReference type="InterPro" id="IPR043566">
    <property type="entry name" value="Rabphilin/DOC2/Noc2"/>
</dbReference>
<dbReference type="InterPro" id="IPR047022">
    <property type="entry name" value="Rabphilin_Doc2_C2A"/>
</dbReference>
<dbReference type="InterPro" id="IPR001565">
    <property type="entry name" value="Synaptotagmin"/>
</dbReference>
<dbReference type="InterPro" id="IPR017455">
    <property type="entry name" value="Znf_FYVE-rel"/>
</dbReference>
<dbReference type="InterPro" id="IPR011011">
    <property type="entry name" value="Znf_FYVE_PHD"/>
</dbReference>
<dbReference type="InterPro" id="IPR013083">
    <property type="entry name" value="Znf_RING/FYVE/PHD"/>
</dbReference>
<dbReference type="PANTHER" id="PTHR45729">
    <property type="entry name" value="RABPHILIN, ISOFORM A"/>
    <property type="match status" value="1"/>
</dbReference>
<dbReference type="PANTHER" id="PTHR45729:SF6">
    <property type="entry name" value="RABPHILIN, ISOFORM A"/>
    <property type="match status" value="1"/>
</dbReference>
<dbReference type="Pfam" id="PF00168">
    <property type="entry name" value="C2"/>
    <property type="match status" value="2"/>
</dbReference>
<dbReference type="Pfam" id="PF02318">
    <property type="entry name" value="FYVE_2"/>
    <property type="match status" value="1"/>
</dbReference>
<dbReference type="PRINTS" id="PR00360">
    <property type="entry name" value="C2DOMAIN"/>
</dbReference>
<dbReference type="PRINTS" id="PR00399">
    <property type="entry name" value="SYNAPTOTAGMN"/>
</dbReference>
<dbReference type="SMART" id="SM00239">
    <property type="entry name" value="C2"/>
    <property type="match status" value="2"/>
</dbReference>
<dbReference type="SUPFAM" id="SSF49562">
    <property type="entry name" value="C2 domain (Calcium/lipid-binding domain, CaLB)"/>
    <property type="match status" value="2"/>
</dbReference>
<dbReference type="SUPFAM" id="SSF57903">
    <property type="entry name" value="FYVE/PHD zinc finger"/>
    <property type="match status" value="1"/>
</dbReference>
<dbReference type="PROSITE" id="PS50004">
    <property type="entry name" value="C2"/>
    <property type="match status" value="2"/>
</dbReference>
<dbReference type="PROSITE" id="PS50916">
    <property type="entry name" value="RABBD"/>
    <property type="match status" value="1"/>
</dbReference>
<dbReference type="PROSITE" id="PS50178">
    <property type="entry name" value="ZF_FYVE"/>
    <property type="match status" value="1"/>
</dbReference>
<comment type="function">
    <text evidence="6">Rab-3 effector.</text>
</comment>
<comment type="cofactor">
    <cofactor evidence="2">
        <name>Ca(2+)</name>
        <dbReference type="ChEBI" id="CHEBI:29108"/>
    </cofactor>
</comment>
<comment type="subcellular location">
    <subcellularLocation>
        <location evidence="1">Synapse</location>
    </subcellularLocation>
</comment>
<comment type="alternative products">
    <event type="alternative splicing"/>
    <isoform>
        <id>P41885-1</id>
        <name evidence="12">d</name>
        <sequence type="displayed"/>
    </isoform>
    <isoform>
        <id>P41885-2</id>
        <name evidence="9">a</name>
        <sequence type="described" ref="VSP_011908"/>
    </isoform>
    <isoform>
        <id>P41885-3</id>
        <name evidence="10">b</name>
        <sequence type="described" ref="VSP_062476"/>
    </isoform>
    <isoform>
        <id>P41885-4</id>
        <name evidence="11">c</name>
        <sequence type="described" ref="VSP_062475"/>
    </isoform>
</comment>
<organism>
    <name type="scientific">Caenorhabditis elegans</name>
    <dbReference type="NCBI Taxonomy" id="6239"/>
    <lineage>
        <taxon>Eukaryota</taxon>
        <taxon>Metazoa</taxon>
        <taxon>Ecdysozoa</taxon>
        <taxon>Nematoda</taxon>
        <taxon>Chromadorea</taxon>
        <taxon>Rhabditida</taxon>
        <taxon>Rhabditina</taxon>
        <taxon>Rhabditomorpha</taxon>
        <taxon>Rhabditoidea</taxon>
        <taxon>Rhabditidae</taxon>
        <taxon>Peloderinae</taxon>
        <taxon>Caenorhabditis</taxon>
    </lineage>
</organism>
<gene>
    <name type="primary">rbf-1</name>
    <name type="ORF">F37A4.7</name>
</gene>
<keyword id="KW-0025">Alternative splicing</keyword>
<keyword id="KW-0106">Calcium</keyword>
<keyword id="KW-0268">Exocytosis</keyword>
<keyword id="KW-0479">Metal-binding</keyword>
<keyword id="KW-1185">Reference proteome</keyword>
<keyword id="KW-0677">Repeat</keyword>
<keyword id="KW-0770">Synapse</keyword>
<keyword id="KW-0862">Zinc</keyword>
<keyword id="KW-0863">Zinc-finger</keyword>